<reference key="1">
    <citation type="journal article" date="2006" name="J. Bacteriol.">
        <title>Pathogenomic sequence analysis of Bacillus cereus and Bacillus thuringiensis isolates closely related to Bacillus anthracis.</title>
        <authorList>
            <person name="Han C.S."/>
            <person name="Xie G."/>
            <person name="Challacombe J.F."/>
            <person name="Altherr M.R."/>
            <person name="Bhotika S.S."/>
            <person name="Bruce D."/>
            <person name="Campbell C.S."/>
            <person name="Campbell M.L."/>
            <person name="Chen J."/>
            <person name="Chertkov O."/>
            <person name="Cleland C."/>
            <person name="Dimitrijevic M."/>
            <person name="Doggett N.A."/>
            <person name="Fawcett J.J."/>
            <person name="Glavina T."/>
            <person name="Goodwin L.A."/>
            <person name="Hill K.K."/>
            <person name="Hitchcock P."/>
            <person name="Jackson P.J."/>
            <person name="Keim P."/>
            <person name="Kewalramani A.R."/>
            <person name="Longmire J."/>
            <person name="Lucas S."/>
            <person name="Malfatti S."/>
            <person name="McMurry K."/>
            <person name="Meincke L.J."/>
            <person name="Misra M."/>
            <person name="Moseman B.L."/>
            <person name="Mundt M."/>
            <person name="Munk A.C."/>
            <person name="Okinaka R.T."/>
            <person name="Parson-Quintana B."/>
            <person name="Reilly L.P."/>
            <person name="Richardson P."/>
            <person name="Robinson D.L."/>
            <person name="Rubin E."/>
            <person name="Saunders E."/>
            <person name="Tapia R."/>
            <person name="Tesmer J.G."/>
            <person name="Thayer N."/>
            <person name="Thompson L.S."/>
            <person name="Tice H."/>
            <person name="Ticknor L.O."/>
            <person name="Wills P.L."/>
            <person name="Brettin T.S."/>
            <person name="Gilna P."/>
        </authorList>
    </citation>
    <scope>NUCLEOTIDE SEQUENCE [LARGE SCALE GENOMIC DNA]</scope>
    <source>
        <strain>ZK / E33L</strain>
    </source>
</reference>
<gene>
    <name evidence="1" type="primary">pyrB</name>
    <name type="ordered locus">BCE33L3648</name>
</gene>
<accession>Q636D7</accession>
<keyword id="KW-0665">Pyrimidine biosynthesis</keyword>
<keyword id="KW-0808">Transferase</keyword>
<sequence>MSHLLTMSELSEVEISEILKDAEDFANGKESKTTEQTFVANLFFENSTRTRFSFEVAEKRLGLDVLNFSADASSVQKGETLYDTIRTLESIGTKAVVIRHEQDRYFDELKDQVNIPILNAGDGCGNHPTQCLLDLLTIKQEFGRFEGLKIAIVGDVRHSRVARSNAEALTKLGATIYFASPEEWKDEDNTFGTYKPLDELVPEVDVMMLLRVQHERHDHYETDIMKEYHEKHGLTVEREKRMKEGSIIMHPAPVNRDVEIASELVECERSRIFKQMENGVYVRMAVLKRALPNVLGGMKHELFV</sequence>
<proteinExistence type="inferred from homology"/>
<feature type="chain" id="PRO_0000113093" description="Aspartate carbamoyltransferase catalytic subunit">
    <location>
        <begin position="1"/>
        <end position="304"/>
    </location>
</feature>
<feature type="binding site" evidence="1">
    <location>
        <position position="49"/>
    </location>
    <ligand>
        <name>carbamoyl phosphate</name>
        <dbReference type="ChEBI" id="CHEBI:58228"/>
    </ligand>
</feature>
<feature type="binding site" evidence="1">
    <location>
        <position position="50"/>
    </location>
    <ligand>
        <name>carbamoyl phosphate</name>
        <dbReference type="ChEBI" id="CHEBI:58228"/>
    </ligand>
</feature>
<feature type="binding site" evidence="1">
    <location>
        <position position="77"/>
    </location>
    <ligand>
        <name>L-aspartate</name>
        <dbReference type="ChEBI" id="CHEBI:29991"/>
    </ligand>
</feature>
<feature type="binding site" evidence="1">
    <location>
        <position position="99"/>
    </location>
    <ligand>
        <name>carbamoyl phosphate</name>
        <dbReference type="ChEBI" id="CHEBI:58228"/>
    </ligand>
</feature>
<feature type="binding site" evidence="1">
    <location>
        <position position="127"/>
    </location>
    <ligand>
        <name>carbamoyl phosphate</name>
        <dbReference type="ChEBI" id="CHEBI:58228"/>
    </ligand>
</feature>
<feature type="binding site" evidence="1">
    <location>
        <position position="130"/>
    </location>
    <ligand>
        <name>carbamoyl phosphate</name>
        <dbReference type="ChEBI" id="CHEBI:58228"/>
    </ligand>
</feature>
<feature type="binding site" evidence="1">
    <location>
        <position position="160"/>
    </location>
    <ligand>
        <name>L-aspartate</name>
        <dbReference type="ChEBI" id="CHEBI:29991"/>
    </ligand>
</feature>
<feature type="binding site" evidence="1">
    <location>
        <position position="211"/>
    </location>
    <ligand>
        <name>L-aspartate</name>
        <dbReference type="ChEBI" id="CHEBI:29991"/>
    </ligand>
</feature>
<feature type="binding site" evidence="1">
    <location>
        <position position="252"/>
    </location>
    <ligand>
        <name>carbamoyl phosphate</name>
        <dbReference type="ChEBI" id="CHEBI:58228"/>
    </ligand>
</feature>
<feature type="binding site" evidence="1">
    <location>
        <position position="253"/>
    </location>
    <ligand>
        <name>carbamoyl phosphate</name>
        <dbReference type="ChEBI" id="CHEBI:58228"/>
    </ligand>
</feature>
<dbReference type="EC" id="2.1.3.2" evidence="1"/>
<dbReference type="EMBL" id="CP000001">
    <property type="protein sequence ID" value="AAU16617.1"/>
    <property type="molecule type" value="Genomic_DNA"/>
</dbReference>
<dbReference type="RefSeq" id="WP_000018849.1">
    <property type="nucleotide sequence ID" value="NZ_CP009968.1"/>
</dbReference>
<dbReference type="SMR" id="Q636D7"/>
<dbReference type="GeneID" id="75087026"/>
<dbReference type="KEGG" id="bcz:BCE33L3648"/>
<dbReference type="PATRIC" id="fig|288681.22.peg.1763"/>
<dbReference type="UniPathway" id="UPA00070">
    <property type="reaction ID" value="UER00116"/>
</dbReference>
<dbReference type="Proteomes" id="UP000002612">
    <property type="component" value="Chromosome"/>
</dbReference>
<dbReference type="GO" id="GO:0005829">
    <property type="term" value="C:cytosol"/>
    <property type="evidence" value="ECO:0007669"/>
    <property type="project" value="TreeGrafter"/>
</dbReference>
<dbReference type="GO" id="GO:0016597">
    <property type="term" value="F:amino acid binding"/>
    <property type="evidence" value="ECO:0007669"/>
    <property type="project" value="InterPro"/>
</dbReference>
<dbReference type="GO" id="GO:0004070">
    <property type="term" value="F:aspartate carbamoyltransferase activity"/>
    <property type="evidence" value="ECO:0007669"/>
    <property type="project" value="UniProtKB-UniRule"/>
</dbReference>
<dbReference type="GO" id="GO:0006207">
    <property type="term" value="P:'de novo' pyrimidine nucleobase biosynthetic process"/>
    <property type="evidence" value="ECO:0007669"/>
    <property type="project" value="InterPro"/>
</dbReference>
<dbReference type="GO" id="GO:0044205">
    <property type="term" value="P:'de novo' UMP biosynthetic process"/>
    <property type="evidence" value="ECO:0007669"/>
    <property type="project" value="UniProtKB-UniRule"/>
</dbReference>
<dbReference type="GO" id="GO:0006520">
    <property type="term" value="P:amino acid metabolic process"/>
    <property type="evidence" value="ECO:0007669"/>
    <property type="project" value="InterPro"/>
</dbReference>
<dbReference type="FunFam" id="3.40.50.1370:FF:000001">
    <property type="entry name" value="Aspartate carbamoyltransferase"/>
    <property type="match status" value="1"/>
</dbReference>
<dbReference type="FunFam" id="3.40.50.1370:FF:000011">
    <property type="entry name" value="Aspartate carbamoyltransferase"/>
    <property type="match status" value="1"/>
</dbReference>
<dbReference type="Gene3D" id="3.40.50.1370">
    <property type="entry name" value="Aspartate/ornithine carbamoyltransferase"/>
    <property type="match status" value="2"/>
</dbReference>
<dbReference type="HAMAP" id="MF_00001">
    <property type="entry name" value="Asp_carb_tr"/>
    <property type="match status" value="1"/>
</dbReference>
<dbReference type="InterPro" id="IPR006132">
    <property type="entry name" value="Asp/Orn_carbamoyltranf_P-bd"/>
</dbReference>
<dbReference type="InterPro" id="IPR006130">
    <property type="entry name" value="Asp/Orn_carbamoylTrfase"/>
</dbReference>
<dbReference type="InterPro" id="IPR036901">
    <property type="entry name" value="Asp/Orn_carbamoylTrfase_sf"/>
</dbReference>
<dbReference type="InterPro" id="IPR002082">
    <property type="entry name" value="Asp_carbamoyltransf"/>
</dbReference>
<dbReference type="InterPro" id="IPR006131">
    <property type="entry name" value="Asp_carbamoyltransf_Asp/Orn-bd"/>
</dbReference>
<dbReference type="NCBIfam" id="TIGR00670">
    <property type="entry name" value="asp_carb_tr"/>
    <property type="match status" value="1"/>
</dbReference>
<dbReference type="NCBIfam" id="NF002032">
    <property type="entry name" value="PRK00856.1"/>
    <property type="match status" value="1"/>
</dbReference>
<dbReference type="PANTHER" id="PTHR45753:SF6">
    <property type="entry name" value="ASPARTATE CARBAMOYLTRANSFERASE"/>
    <property type="match status" value="1"/>
</dbReference>
<dbReference type="PANTHER" id="PTHR45753">
    <property type="entry name" value="ORNITHINE CARBAMOYLTRANSFERASE, MITOCHONDRIAL"/>
    <property type="match status" value="1"/>
</dbReference>
<dbReference type="Pfam" id="PF00185">
    <property type="entry name" value="OTCace"/>
    <property type="match status" value="1"/>
</dbReference>
<dbReference type="Pfam" id="PF02729">
    <property type="entry name" value="OTCace_N"/>
    <property type="match status" value="1"/>
</dbReference>
<dbReference type="PRINTS" id="PR00100">
    <property type="entry name" value="AOTCASE"/>
</dbReference>
<dbReference type="PRINTS" id="PR00101">
    <property type="entry name" value="ATCASE"/>
</dbReference>
<dbReference type="SUPFAM" id="SSF53671">
    <property type="entry name" value="Aspartate/ornithine carbamoyltransferase"/>
    <property type="match status" value="1"/>
</dbReference>
<dbReference type="PROSITE" id="PS00097">
    <property type="entry name" value="CARBAMOYLTRANSFERASE"/>
    <property type="match status" value="1"/>
</dbReference>
<name>PYRB_BACCZ</name>
<comment type="function">
    <text evidence="1">Catalyzes the condensation of carbamoyl phosphate and aspartate to form carbamoyl aspartate and inorganic phosphate, the committed step in the de novo pyrimidine nucleotide biosynthesis pathway.</text>
</comment>
<comment type="catalytic activity">
    <reaction evidence="1">
        <text>carbamoyl phosphate + L-aspartate = N-carbamoyl-L-aspartate + phosphate + H(+)</text>
        <dbReference type="Rhea" id="RHEA:20013"/>
        <dbReference type="ChEBI" id="CHEBI:15378"/>
        <dbReference type="ChEBI" id="CHEBI:29991"/>
        <dbReference type="ChEBI" id="CHEBI:32814"/>
        <dbReference type="ChEBI" id="CHEBI:43474"/>
        <dbReference type="ChEBI" id="CHEBI:58228"/>
        <dbReference type="EC" id="2.1.3.2"/>
    </reaction>
</comment>
<comment type="pathway">
    <text evidence="1">Pyrimidine metabolism; UMP biosynthesis via de novo pathway; (S)-dihydroorotate from bicarbonate: step 2/3.</text>
</comment>
<comment type="subunit">
    <text evidence="1">Heterododecamer (2C3:3R2) of six catalytic PyrB chains organized as two trimers (C3), and six regulatory PyrI chains organized as three dimers (R2).</text>
</comment>
<comment type="similarity">
    <text evidence="1">Belongs to the aspartate/ornithine carbamoyltransferase superfamily. ATCase family.</text>
</comment>
<organism>
    <name type="scientific">Bacillus cereus (strain ZK / E33L)</name>
    <dbReference type="NCBI Taxonomy" id="288681"/>
    <lineage>
        <taxon>Bacteria</taxon>
        <taxon>Bacillati</taxon>
        <taxon>Bacillota</taxon>
        <taxon>Bacilli</taxon>
        <taxon>Bacillales</taxon>
        <taxon>Bacillaceae</taxon>
        <taxon>Bacillus</taxon>
        <taxon>Bacillus cereus group</taxon>
    </lineage>
</organism>
<evidence type="ECO:0000255" key="1">
    <source>
        <dbReference type="HAMAP-Rule" id="MF_00001"/>
    </source>
</evidence>
<protein>
    <recommendedName>
        <fullName evidence="1">Aspartate carbamoyltransferase catalytic subunit</fullName>
        <ecNumber evidence="1">2.1.3.2</ecNumber>
    </recommendedName>
    <alternativeName>
        <fullName evidence="1">Aspartate transcarbamylase</fullName>
        <shortName evidence="1">ATCase</shortName>
    </alternativeName>
</protein>